<sequence length="348" mass="39215">MTDLDLDWQLEELENGRLIPESNVVELCQRVRDILIEESNIQWISSPVTICGDIHGQLHDLLELFRIGGSCPGTKYLFLGDFVDRGFYSVETFLLLLTLKCKYPKEMTLIRGNHESRQITQVYGFYDECVRKYGSANVWRYCCEIFDYLSLGALVDGKVFCVHGGLSPSISSIDQIRLLDRKQEVPHEGAMCDLLWSDPEDISGWGLSPRGAGFLFGADVSEVFNRANDLSFIARAHQLVMEGYKIHFSDKDKQYPKFTNEEDSELDSDSASPVDDSPAPGDIITIPEKDKGSVVTVWSAPNYCYRCGNVASILQLDENQTQSFKIFGTASQERSGIPTKRPIADYFL</sequence>
<reference key="1">
    <citation type="journal article" date="2002" name="Nature">
        <title>The genome sequence of Schizosaccharomyces pombe.</title>
        <authorList>
            <person name="Wood V."/>
            <person name="Gwilliam R."/>
            <person name="Rajandream M.A."/>
            <person name="Lyne M.H."/>
            <person name="Lyne R."/>
            <person name="Stewart A."/>
            <person name="Sgouros J.G."/>
            <person name="Peat N."/>
            <person name="Hayles J."/>
            <person name="Baker S.G."/>
            <person name="Basham D."/>
            <person name="Bowman S."/>
            <person name="Brooks K."/>
            <person name="Brown D."/>
            <person name="Brown S."/>
            <person name="Chillingworth T."/>
            <person name="Churcher C.M."/>
            <person name="Collins M."/>
            <person name="Connor R."/>
            <person name="Cronin A."/>
            <person name="Davis P."/>
            <person name="Feltwell T."/>
            <person name="Fraser A."/>
            <person name="Gentles S."/>
            <person name="Goble A."/>
            <person name="Hamlin N."/>
            <person name="Harris D.E."/>
            <person name="Hidalgo J."/>
            <person name="Hodgson G."/>
            <person name="Holroyd S."/>
            <person name="Hornsby T."/>
            <person name="Howarth S."/>
            <person name="Huckle E.J."/>
            <person name="Hunt S."/>
            <person name="Jagels K."/>
            <person name="James K.D."/>
            <person name="Jones L."/>
            <person name="Jones M."/>
            <person name="Leather S."/>
            <person name="McDonald S."/>
            <person name="McLean J."/>
            <person name="Mooney P."/>
            <person name="Moule S."/>
            <person name="Mungall K.L."/>
            <person name="Murphy L.D."/>
            <person name="Niblett D."/>
            <person name="Odell C."/>
            <person name="Oliver K."/>
            <person name="O'Neil S."/>
            <person name="Pearson D."/>
            <person name="Quail M.A."/>
            <person name="Rabbinowitsch E."/>
            <person name="Rutherford K.M."/>
            <person name="Rutter S."/>
            <person name="Saunders D."/>
            <person name="Seeger K."/>
            <person name="Sharp S."/>
            <person name="Skelton J."/>
            <person name="Simmonds M.N."/>
            <person name="Squares R."/>
            <person name="Squares S."/>
            <person name="Stevens K."/>
            <person name="Taylor K."/>
            <person name="Taylor R.G."/>
            <person name="Tivey A."/>
            <person name="Walsh S.V."/>
            <person name="Warren T."/>
            <person name="Whitehead S."/>
            <person name="Woodward J.R."/>
            <person name="Volckaert G."/>
            <person name="Aert R."/>
            <person name="Robben J."/>
            <person name="Grymonprez B."/>
            <person name="Weltjens I."/>
            <person name="Vanstreels E."/>
            <person name="Rieger M."/>
            <person name="Schaefer M."/>
            <person name="Mueller-Auer S."/>
            <person name="Gabel C."/>
            <person name="Fuchs M."/>
            <person name="Duesterhoeft A."/>
            <person name="Fritzc C."/>
            <person name="Holzer E."/>
            <person name="Moestl D."/>
            <person name="Hilbert H."/>
            <person name="Borzym K."/>
            <person name="Langer I."/>
            <person name="Beck A."/>
            <person name="Lehrach H."/>
            <person name="Reinhardt R."/>
            <person name="Pohl T.M."/>
            <person name="Eger P."/>
            <person name="Zimmermann W."/>
            <person name="Wedler H."/>
            <person name="Wambutt R."/>
            <person name="Purnelle B."/>
            <person name="Goffeau A."/>
            <person name="Cadieu E."/>
            <person name="Dreano S."/>
            <person name="Gloux S."/>
            <person name="Lelaure V."/>
            <person name="Mottier S."/>
            <person name="Galibert F."/>
            <person name="Aves S.J."/>
            <person name="Xiang Z."/>
            <person name="Hunt C."/>
            <person name="Moore K."/>
            <person name="Hurst S.M."/>
            <person name="Lucas M."/>
            <person name="Rochet M."/>
            <person name="Gaillardin C."/>
            <person name="Tallada V.A."/>
            <person name="Garzon A."/>
            <person name="Thode G."/>
            <person name="Daga R.R."/>
            <person name="Cruzado L."/>
            <person name="Jimenez J."/>
            <person name="Sanchez M."/>
            <person name="del Rey F."/>
            <person name="Benito J."/>
            <person name="Dominguez A."/>
            <person name="Revuelta J.L."/>
            <person name="Moreno S."/>
            <person name="Armstrong J."/>
            <person name="Forsburg S.L."/>
            <person name="Cerutti L."/>
            <person name="Lowe T."/>
            <person name="McCombie W.R."/>
            <person name="Paulsen I."/>
            <person name="Potashkin J."/>
            <person name="Shpakovski G.V."/>
            <person name="Ussery D."/>
            <person name="Barrell B.G."/>
            <person name="Nurse P."/>
        </authorList>
    </citation>
    <scope>NUCLEOTIDE SEQUENCE [LARGE SCALE GENOMIC DNA]</scope>
    <source>
        <strain>972 / ATCC 24843</strain>
    </source>
</reference>
<reference key="2">
    <citation type="journal article" date="2006" name="Nat. Biotechnol.">
        <title>ORFeome cloning and global analysis of protein localization in the fission yeast Schizosaccharomyces pombe.</title>
        <authorList>
            <person name="Matsuyama A."/>
            <person name="Arai R."/>
            <person name="Yashiroda Y."/>
            <person name="Shirai A."/>
            <person name="Kamata A."/>
            <person name="Sekido S."/>
            <person name="Kobayashi Y."/>
            <person name="Hashimoto A."/>
            <person name="Hamamoto M."/>
            <person name="Hiraoka Y."/>
            <person name="Horinouchi S."/>
            <person name="Yoshida M."/>
        </authorList>
    </citation>
    <scope>SUBCELLULAR LOCATION [LARGE SCALE ANALYSIS]</scope>
</reference>
<reference key="3">
    <citation type="journal article" date="2008" name="J. Proteome Res.">
        <title>Phosphoproteome analysis of fission yeast.</title>
        <authorList>
            <person name="Wilson-Grady J.T."/>
            <person name="Villen J."/>
            <person name="Gygi S.P."/>
        </authorList>
    </citation>
    <scope>PHOSPHORYLATION [LARGE SCALE ANALYSIS] AT SER-272</scope>
    <scope>IDENTIFICATION BY MASS SPECTROMETRY</scope>
</reference>
<comment type="catalytic activity">
    <reaction>
        <text>O-phospho-L-seryl-[protein] + H2O = L-seryl-[protein] + phosphate</text>
        <dbReference type="Rhea" id="RHEA:20629"/>
        <dbReference type="Rhea" id="RHEA-COMP:9863"/>
        <dbReference type="Rhea" id="RHEA-COMP:11604"/>
        <dbReference type="ChEBI" id="CHEBI:15377"/>
        <dbReference type="ChEBI" id="CHEBI:29999"/>
        <dbReference type="ChEBI" id="CHEBI:43474"/>
        <dbReference type="ChEBI" id="CHEBI:83421"/>
        <dbReference type="EC" id="3.1.3.16"/>
    </reaction>
</comment>
<comment type="catalytic activity">
    <reaction>
        <text>O-phospho-L-threonyl-[protein] + H2O = L-threonyl-[protein] + phosphate</text>
        <dbReference type="Rhea" id="RHEA:47004"/>
        <dbReference type="Rhea" id="RHEA-COMP:11060"/>
        <dbReference type="Rhea" id="RHEA-COMP:11605"/>
        <dbReference type="ChEBI" id="CHEBI:15377"/>
        <dbReference type="ChEBI" id="CHEBI:30013"/>
        <dbReference type="ChEBI" id="CHEBI:43474"/>
        <dbReference type="ChEBI" id="CHEBI:61977"/>
        <dbReference type="EC" id="3.1.3.16"/>
    </reaction>
</comment>
<comment type="cofactor">
    <cofactor evidence="1">
        <name>Mn(2+)</name>
        <dbReference type="ChEBI" id="CHEBI:29035"/>
    </cofactor>
    <text evidence="1">Binds 2 manganese ions per subunit.</text>
</comment>
<comment type="subcellular location">
    <subcellularLocation>
        <location evidence="3">Cytoplasm</location>
    </subcellularLocation>
    <subcellularLocation>
        <location evidence="3">Nucleus</location>
    </subcellularLocation>
</comment>
<comment type="similarity">
    <text evidence="5">Belongs to the PPP phosphatase family. PP-1 subfamily.</text>
</comment>
<accession>O74789</accession>
<keyword id="KW-0963">Cytoplasm</keyword>
<keyword id="KW-0378">Hydrolase</keyword>
<keyword id="KW-0464">Manganese</keyword>
<keyword id="KW-0479">Metal-binding</keyword>
<keyword id="KW-0488">Methylation</keyword>
<keyword id="KW-0539">Nucleus</keyword>
<keyword id="KW-0597">Phosphoprotein</keyword>
<keyword id="KW-0904">Protein phosphatase</keyword>
<keyword id="KW-1185">Reference proteome</keyword>
<proteinExistence type="evidence at protein level"/>
<name>YOU5_SCHPO</name>
<gene>
    <name type="ORF">SPBC26H8.05c</name>
</gene>
<dbReference type="EC" id="3.1.3.16"/>
<dbReference type="EMBL" id="CU329671">
    <property type="protein sequence ID" value="CAA21097.1"/>
    <property type="molecule type" value="Genomic_DNA"/>
</dbReference>
<dbReference type="PIR" id="T40017">
    <property type="entry name" value="T40017"/>
</dbReference>
<dbReference type="SMR" id="O74789"/>
<dbReference type="BioGRID" id="277205">
    <property type="interactions" value="49"/>
</dbReference>
<dbReference type="FunCoup" id="O74789">
    <property type="interactions" value="672"/>
</dbReference>
<dbReference type="STRING" id="284812.O74789"/>
<dbReference type="iPTMnet" id="O74789"/>
<dbReference type="PaxDb" id="4896-SPBC26H8.05c.1"/>
<dbReference type="EnsemblFungi" id="SPBC26H8.05c.1">
    <property type="protein sequence ID" value="SPBC26H8.05c.1:pep"/>
    <property type="gene ID" value="SPBC26H8.05c"/>
</dbReference>
<dbReference type="KEGG" id="spo:2540680"/>
<dbReference type="PomBase" id="SPBC26H8.05c"/>
<dbReference type="VEuPathDB" id="FungiDB:SPBC26H8.05c"/>
<dbReference type="eggNOG" id="KOG0372">
    <property type="taxonomic scope" value="Eukaryota"/>
</dbReference>
<dbReference type="HOGENOM" id="CLU_004962_8_1_1"/>
<dbReference type="InParanoid" id="O74789"/>
<dbReference type="OMA" id="QSTMPID"/>
<dbReference type="PhylomeDB" id="O74789"/>
<dbReference type="PRO" id="PR:O74789"/>
<dbReference type="Proteomes" id="UP000002485">
    <property type="component" value="Chromosome II"/>
</dbReference>
<dbReference type="GO" id="GO:0005737">
    <property type="term" value="C:cytoplasm"/>
    <property type="evidence" value="ECO:0000318"/>
    <property type="project" value="GO_Central"/>
</dbReference>
<dbReference type="GO" id="GO:0005829">
    <property type="term" value="C:cytosol"/>
    <property type="evidence" value="ECO:0007005"/>
    <property type="project" value="PomBase"/>
</dbReference>
<dbReference type="GO" id="GO:0005634">
    <property type="term" value="C:nucleus"/>
    <property type="evidence" value="ECO:0007005"/>
    <property type="project" value="PomBase"/>
</dbReference>
<dbReference type="GO" id="GO:0030289">
    <property type="term" value="C:protein phosphatase 4 complex"/>
    <property type="evidence" value="ECO:0000266"/>
    <property type="project" value="PomBase"/>
</dbReference>
<dbReference type="GO" id="GO:0046872">
    <property type="term" value="F:metal ion binding"/>
    <property type="evidence" value="ECO:0007669"/>
    <property type="project" value="UniProtKB-KW"/>
</dbReference>
<dbReference type="GO" id="GO:0004722">
    <property type="term" value="F:protein serine/threonine phosphatase activity"/>
    <property type="evidence" value="ECO:0000269"/>
    <property type="project" value="PomBase"/>
</dbReference>
<dbReference type="GO" id="GO:0000724">
    <property type="term" value="P:double-strand break repair via homologous recombination"/>
    <property type="evidence" value="ECO:0000318"/>
    <property type="project" value="GO_Central"/>
</dbReference>
<dbReference type="GO" id="GO:0045875">
    <property type="term" value="P:negative regulation of sister chromatid cohesion"/>
    <property type="evidence" value="ECO:0000269"/>
    <property type="project" value="PomBase"/>
</dbReference>
<dbReference type="GO" id="GO:2001034">
    <property type="term" value="P:positive regulation of double-strand break repair via nonhomologous end joining"/>
    <property type="evidence" value="ECO:0000266"/>
    <property type="project" value="PomBase"/>
</dbReference>
<dbReference type="GO" id="GO:0045876">
    <property type="term" value="P:positive regulation of sister chromatid cohesion"/>
    <property type="evidence" value="ECO:0000269"/>
    <property type="project" value="PomBase"/>
</dbReference>
<dbReference type="GO" id="GO:0023052">
    <property type="term" value="P:signaling"/>
    <property type="evidence" value="ECO:0000303"/>
    <property type="project" value="PomBase"/>
</dbReference>
<dbReference type="CDD" id="cd07415">
    <property type="entry name" value="MPP_PP2A_PP4_PP6"/>
    <property type="match status" value="1"/>
</dbReference>
<dbReference type="Gene3D" id="3.60.21.10">
    <property type="match status" value="1"/>
</dbReference>
<dbReference type="InterPro" id="IPR004843">
    <property type="entry name" value="Calcineurin-like_PHP_ApaH"/>
</dbReference>
<dbReference type="InterPro" id="IPR029052">
    <property type="entry name" value="Metallo-depent_PP-like"/>
</dbReference>
<dbReference type="InterPro" id="IPR047129">
    <property type="entry name" value="PPA2-like"/>
</dbReference>
<dbReference type="InterPro" id="IPR006186">
    <property type="entry name" value="Ser/Thr-sp_prot-phosphatase"/>
</dbReference>
<dbReference type="PANTHER" id="PTHR45619">
    <property type="entry name" value="SERINE/THREONINE-PROTEIN PHOSPHATASE PP2A-RELATED"/>
    <property type="match status" value="1"/>
</dbReference>
<dbReference type="Pfam" id="PF00149">
    <property type="entry name" value="Metallophos"/>
    <property type="match status" value="1"/>
</dbReference>
<dbReference type="PRINTS" id="PR00114">
    <property type="entry name" value="STPHPHTASE"/>
</dbReference>
<dbReference type="SMART" id="SM00156">
    <property type="entry name" value="PP2Ac"/>
    <property type="match status" value="1"/>
</dbReference>
<dbReference type="SUPFAM" id="SSF56300">
    <property type="entry name" value="Metallo-dependent phosphatases"/>
    <property type="match status" value="1"/>
</dbReference>
<dbReference type="PROSITE" id="PS00125">
    <property type="entry name" value="SER_THR_PHOSPHATASE"/>
    <property type="match status" value="1"/>
</dbReference>
<protein>
    <recommendedName>
        <fullName>Putative serine/threonine-protein phosphatase C26H8.05c</fullName>
        <ecNumber>3.1.3.16</ecNumber>
    </recommendedName>
</protein>
<evidence type="ECO:0000250" key="1"/>
<evidence type="ECO:0000256" key="2">
    <source>
        <dbReference type="SAM" id="MobiDB-lite"/>
    </source>
</evidence>
<evidence type="ECO:0000269" key="3">
    <source>
    </source>
</evidence>
<evidence type="ECO:0000269" key="4">
    <source>
    </source>
</evidence>
<evidence type="ECO:0000305" key="5"/>
<feature type="chain" id="PRO_0000310805" description="Putative serine/threonine-protein phosphatase C26H8.05c">
    <location>
        <begin position="1"/>
        <end position="348"/>
    </location>
</feature>
<feature type="region of interest" description="Disordered" evidence="2">
    <location>
        <begin position="259"/>
        <end position="282"/>
    </location>
</feature>
<feature type="compositionally biased region" description="Low complexity" evidence="2">
    <location>
        <begin position="269"/>
        <end position="280"/>
    </location>
</feature>
<feature type="active site" description="Proton donor" evidence="1">
    <location>
        <position position="114"/>
    </location>
</feature>
<feature type="binding site" evidence="1">
    <location>
        <position position="53"/>
    </location>
    <ligand>
        <name>Mn(2+)</name>
        <dbReference type="ChEBI" id="CHEBI:29035"/>
        <label>1</label>
    </ligand>
</feature>
<feature type="binding site" evidence="1">
    <location>
        <position position="55"/>
    </location>
    <ligand>
        <name>Mn(2+)</name>
        <dbReference type="ChEBI" id="CHEBI:29035"/>
        <label>1</label>
    </ligand>
</feature>
<feature type="binding site" evidence="1">
    <location>
        <position position="81"/>
    </location>
    <ligand>
        <name>Mn(2+)</name>
        <dbReference type="ChEBI" id="CHEBI:29035"/>
        <label>1</label>
    </ligand>
</feature>
<feature type="binding site" evidence="1">
    <location>
        <position position="81"/>
    </location>
    <ligand>
        <name>Mn(2+)</name>
        <dbReference type="ChEBI" id="CHEBI:29035"/>
        <label>2</label>
    </ligand>
</feature>
<feature type="binding site" evidence="1">
    <location>
        <position position="113"/>
    </location>
    <ligand>
        <name>Mn(2+)</name>
        <dbReference type="ChEBI" id="CHEBI:29035"/>
        <label>2</label>
    </ligand>
</feature>
<feature type="binding site" evidence="1">
    <location>
        <position position="163"/>
    </location>
    <ligand>
        <name>Mn(2+)</name>
        <dbReference type="ChEBI" id="CHEBI:29035"/>
        <label>2</label>
    </ligand>
</feature>
<feature type="binding site" evidence="1">
    <location>
        <position position="237"/>
    </location>
    <ligand>
        <name>Mn(2+)</name>
        <dbReference type="ChEBI" id="CHEBI:29035"/>
        <label>2</label>
    </ligand>
</feature>
<feature type="modified residue" description="Phosphoserine" evidence="4">
    <location>
        <position position="272"/>
    </location>
</feature>
<feature type="modified residue" description="Leucine methyl ester" evidence="1">
    <location>
        <position position="348"/>
    </location>
</feature>
<organism>
    <name type="scientific">Schizosaccharomyces pombe (strain 972 / ATCC 24843)</name>
    <name type="common">Fission yeast</name>
    <dbReference type="NCBI Taxonomy" id="284812"/>
    <lineage>
        <taxon>Eukaryota</taxon>
        <taxon>Fungi</taxon>
        <taxon>Dikarya</taxon>
        <taxon>Ascomycota</taxon>
        <taxon>Taphrinomycotina</taxon>
        <taxon>Schizosaccharomycetes</taxon>
        <taxon>Schizosaccharomycetales</taxon>
        <taxon>Schizosaccharomycetaceae</taxon>
        <taxon>Schizosaccharomyces</taxon>
    </lineage>
</organism>